<feature type="chain" id="PRO_0000049056" description="Homeobox protein ceh-43">
    <location>
        <begin position="1"/>
        <end position="273"/>
    </location>
</feature>
<feature type="DNA-binding region" description="Homeobox" evidence="1">
    <location>
        <begin position="102"/>
        <end position="161"/>
    </location>
</feature>
<feature type="region of interest" description="Disordered" evidence="2">
    <location>
        <begin position="47"/>
        <end position="79"/>
    </location>
</feature>
<feature type="region of interest" description="Disordered" evidence="2">
    <location>
        <begin position="153"/>
        <end position="204"/>
    </location>
</feature>
<feature type="mutagenesis site" description="In ot406; significantly more pronounced defect in the expression of dopamine pathway genes in adults compared with young larvae. Progressive loss of expression of the dopamine transporter dat-1 in the ADE and CEPD neurons; effect is exacerbated, either in the ast-1 mutant background or, in a combined ceh-20 and ceh-40 mutant background." evidence="4">
    <original>R</original>
    <variation>K</variation>
    <location>
        <position position="103"/>
    </location>
</feature>
<organism evidence="6">
    <name type="scientific">Caenorhabditis elegans</name>
    <dbReference type="NCBI Taxonomy" id="6239"/>
    <lineage>
        <taxon>Eukaryota</taxon>
        <taxon>Metazoa</taxon>
        <taxon>Ecdysozoa</taxon>
        <taxon>Nematoda</taxon>
        <taxon>Chromadorea</taxon>
        <taxon>Rhabditida</taxon>
        <taxon>Rhabditina</taxon>
        <taxon>Rhabditomorpha</taxon>
        <taxon>Rhabditoidea</taxon>
        <taxon>Rhabditidae</taxon>
        <taxon>Peloderinae</taxon>
        <taxon>Caenorhabditis</taxon>
    </lineage>
</organism>
<protein>
    <recommendedName>
        <fullName evidence="7">Homeobox protein ceh-43</fullName>
    </recommendedName>
</protein>
<evidence type="ECO:0000255" key="1">
    <source>
        <dbReference type="PROSITE-ProRule" id="PRU00108"/>
    </source>
</evidence>
<evidence type="ECO:0000256" key="2">
    <source>
        <dbReference type="SAM" id="MobiDB-lite"/>
    </source>
</evidence>
<evidence type="ECO:0000269" key="3">
    <source>
    </source>
</evidence>
<evidence type="ECO:0000269" key="4">
    <source>
    </source>
</evidence>
<evidence type="ECO:0000305" key="5"/>
<evidence type="ECO:0000312" key="6">
    <source>
        <dbReference type="Proteomes" id="UP000001940"/>
    </source>
</evidence>
<evidence type="ECO:0000312" key="7">
    <source>
        <dbReference type="WormBase" id="C28A5.4a"/>
    </source>
</evidence>
<reference evidence="6" key="1">
    <citation type="journal article" date="1998" name="Science">
        <title>Genome sequence of the nematode C. elegans: a platform for investigating biology.</title>
        <authorList>
            <consortium name="The C. elegans sequencing consortium"/>
        </authorList>
    </citation>
    <scope>NUCLEOTIDE SEQUENCE [LARGE SCALE GENOMIC DNA]</scope>
    <source>
        <strain evidence="6">Bristol N2</strain>
    </source>
</reference>
<reference key="2">
    <citation type="journal article" date="2001" name="Dev. Dyn.">
        <title>The Caenorhabditis elegans distal-less ortholog ceh-43 is required for development of the anterior hypodermis.</title>
        <authorList>
            <person name="Aspock G."/>
            <person name="Buerglin T.R."/>
        </authorList>
    </citation>
    <scope>FUNCTION</scope>
    <scope>TISSUE SPECIFICITY</scope>
</reference>
<reference key="3">
    <citation type="journal article" date="2013" name="Genes Dev.">
        <title>A combinatorial regulatory signature controls terminal differentiation of the dopaminergic nervous system in C. elegans.</title>
        <authorList>
            <person name="Doitsidou M."/>
            <person name="Flames N."/>
            <person name="Topalidou I."/>
            <person name="Abe N."/>
            <person name="Felton T."/>
            <person name="Remesal L."/>
            <person name="Popovitchenko T."/>
            <person name="Mann R."/>
            <person name="Chalfie M."/>
            <person name="Hobert O."/>
        </authorList>
    </citation>
    <scope>FUNCTION</scope>
    <scope>DEVELOPMENTAL STAGE</scope>
    <scope>MUTAGENESIS OF ARG-103</scope>
</reference>
<gene>
    <name type="primary">ceh-43</name>
    <name evidence="7" type="synonym">dopy-2</name>
    <name evidence="7" type="ORF">C28A5.4</name>
</gene>
<proteinExistence type="evidence at protein level"/>
<sequence>MDPSKGFEYVAGDYYQTSGVAPPTSNGAGSNVSPYFPYHAYPTSSTNGATGGSMYGTPQQTSAYAMYPPGPGSSPEEAFPEHTTTKIVEGCEAKYNVKGKKMRKPRTIYNSSQLQMLQKKFQKTQYLALPDRAALAHELGLSQTQVKIWFQNRRSKQKKQKGGSSDHASDEEDDDTEESKPESPPMGESVMIQESSEPRTLVSSSIKTEMKEEYPPMTLNEQYASPYLYGSDFSTILPPSQGFPNNALYNTAGAYPSIDYTNGVYQNTLYKYV</sequence>
<dbReference type="EMBL" id="BX284603">
    <property type="protein sequence ID" value="CAA83601.1"/>
    <property type="molecule type" value="Genomic_DNA"/>
</dbReference>
<dbReference type="PIR" id="C88429">
    <property type="entry name" value="C88429"/>
</dbReference>
<dbReference type="PIR" id="S43577">
    <property type="entry name" value="S43577"/>
</dbReference>
<dbReference type="RefSeq" id="NP_497904.1">
    <property type="nucleotide sequence ID" value="NM_065503.5"/>
</dbReference>
<dbReference type="SMR" id="Q18273"/>
<dbReference type="BioGRID" id="40817">
    <property type="interactions" value="24"/>
</dbReference>
<dbReference type="FunCoup" id="Q18273">
    <property type="interactions" value="16"/>
</dbReference>
<dbReference type="IntAct" id="Q18273">
    <property type="interactions" value="21"/>
</dbReference>
<dbReference type="STRING" id="6239.C28A5.4b.1"/>
<dbReference type="PaxDb" id="6239-C28A5.4"/>
<dbReference type="PeptideAtlas" id="Q18273"/>
<dbReference type="EnsemblMetazoa" id="C28A5.4a.1">
    <property type="protein sequence ID" value="C28A5.4a.1"/>
    <property type="gene ID" value="WBGene00000463"/>
</dbReference>
<dbReference type="GeneID" id="175581"/>
<dbReference type="KEGG" id="cel:CELE_C28A5.4"/>
<dbReference type="UCSC" id="C28A5.4">
    <property type="organism name" value="c. elegans"/>
</dbReference>
<dbReference type="AGR" id="WB:WBGene00000463"/>
<dbReference type="CTD" id="175581"/>
<dbReference type="WormBase" id="C28A5.4a">
    <property type="protein sequence ID" value="CE05325"/>
    <property type="gene ID" value="WBGene00000463"/>
    <property type="gene designation" value="ceh-43"/>
</dbReference>
<dbReference type="eggNOG" id="KOG0850">
    <property type="taxonomic scope" value="Eukaryota"/>
</dbReference>
<dbReference type="GeneTree" id="ENSGT00940000167651"/>
<dbReference type="HOGENOM" id="CLU_1020241_0_0_1"/>
<dbReference type="InParanoid" id="Q18273"/>
<dbReference type="OMA" id="CEAKYNT"/>
<dbReference type="OrthoDB" id="6159439at2759"/>
<dbReference type="PhylomeDB" id="Q18273"/>
<dbReference type="SignaLink" id="Q18273"/>
<dbReference type="PRO" id="PR:Q18273"/>
<dbReference type="Proteomes" id="UP000001940">
    <property type="component" value="Chromosome III"/>
</dbReference>
<dbReference type="Bgee" id="WBGene00000463">
    <property type="expression patterns" value="Expressed in embryo and 3 other cell types or tissues"/>
</dbReference>
<dbReference type="ExpressionAtlas" id="Q18273">
    <property type="expression patterns" value="baseline and differential"/>
</dbReference>
<dbReference type="GO" id="GO:0005634">
    <property type="term" value="C:nucleus"/>
    <property type="evidence" value="ECO:0007669"/>
    <property type="project" value="UniProtKB-SubCell"/>
</dbReference>
<dbReference type="GO" id="GO:0000987">
    <property type="term" value="F:cis-regulatory region sequence-specific DNA binding"/>
    <property type="evidence" value="ECO:0000315"/>
    <property type="project" value="UniProtKB"/>
</dbReference>
<dbReference type="GO" id="GO:0003700">
    <property type="term" value="F:DNA-binding transcription factor activity"/>
    <property type="evidence" value="ECO:0000250"/>
    <property type="project" value="WormBase"/>
</dbReference>
<dbReference type="GO" id="GO:0000981">
    <property type="term" value="F:DNA-binding transcription factor activity, RNA polymerase II-specific"/>
    <property type="evidence" value="ECO:0000315"/>
    <property type="project" value="UniProtKB"/>
</dbReference>
<dbReference type="GO" id="GO:0000978">
    <property type="term" value="F:RNA polymerase II cis-regulatory region sequence-specific DNA binding"/>
    <property type="evidence" value="ECO:0000318"/>
    <property type="project" value="GO_Central"/>
</dbReference>
<dbReference type="GO" id="GO:0007155">
    <property type="term" value="P:cell adhesion"/>
    <property type="evidence" value="ECO:0000304"/>
    <property type="project" value="WormBase"/>
</dbReference>
<dbReference type="GO" id="GO:0030154">
    <property type="term" value="P:cell differentiation"/>
    <property type="evidence" value="ECO:0000318"/>
    <property type="project" value="GO_Central"/>
</dbReference>
<dbReference type="GO" id="GO:0071542">
    <property type="term" value="P:dopaminergic neuron differentiation"/>
    <property type="evidence" value="ECO:0000315"/>
    <property type="project" value="UniProtKB"/>
</dbReference>
<dbReference type="GO" id="GO:0009792">
    <property type="term" value="P:embryo development ending in birth or egg hatching"/>
    <property type="evidence" value="ECO:0000315"/>
    <property type="project" value="WormBase"/>
</dbReference>
<dbReference type="GO" id="GO:0006357">
    <property type="term" value="P:regulation of transcription by RNA polymerase II"/>
    <property type="evidence" value="ECO:0000318"/>
    <property type="project" value="GO_Central"/>
</dbReference>
<dbReference type="CDD" id="cd00086">
    <property type="entry name" value="homeodomain"/>
    <property type="match status" value="1"/>
</dbReference>
<dbReference type="FunFam" id="1.10.10.60:FF:000424">
    <property type="entry name" value="ANTP homeobox protein"/>
    <property type="match status" value="1"/>
</dbReference>
<dbReference type="Gene3D" id="1.10.10.60">
    <property type="entry name" value="Homeodomain-like"/>
    <property type="match status" value="1"/>
</dbReference>
<dbReference type="InterPro" id="IPR050460">
    <property type="entry name" value="Distal-less_Homeobox_TF"/>
</dbReference>
<dbReference type="InterPro" id="IPR001356">
    <property type="entry name" value="HD"/>
</dbReference>
<dbReference type="InterPro" id="IPR020479">
    <property type="entry name" value="HD_metazoa"/>
</dbReference>
<dbReference type="InterPro" id="IPR017970">
    <property type="entry name" value="Homeobox_CS"/>
</dbReference>
<dbReference type="InterPro" id="IPR009057">
    <property type="entry name" value="Homeodomain-like_sf"/>
</dbReference>
<dbReference type="InterPro" id="IPR000047">
    <property type="entry name" value="HTH_motif"/>
</dbReference>
<dbReference type="PANTHER" id="PTHR24327">
    <property type="entry name" value="HOMEOBOX PROTEIN"/>
    <property type="match status" value="1"/>
</dbReference>
<dbReference type="PANTHER" id="PTHR24327:SF81">
    <property type="entry name" value="HOMEOTIC PROTEIN DISTAL-LESS-RELATED"/>
    <property type="match status" value="1"/>
</dbReference>
<dbReference type="Pfam" id="PF00046">
    <property type="entry name" value="Homeodomain"/>
    <property type="match status" value="1"/>
</dbReference>
<dbReference type="PRINTS" id="PR00024">
    <property type="entry name" value="HOMEOBOX"/>
</dbReference>
<dbReference type="PRINTS" id="PR00031">
    <property type="entry name" value="HTHREPRESSR"/>
</dbReference>
<dbReference type="SMART" id="SM00389">
    <property type="entry name" value="HOX"/>
    <property type="match status" value="1"/>
</dbReference>
<dbReference type="SUPFAM" id="SSF46689">
    <property type="entry name" value="Homeodomain-like"/>
    <property type="match status" value="1"/>
</dbReference>
<dbReference type="PROSITE" id="PS00027">
    <property type="entry name" value="HOMEOBOX_1"/>
    <property type="match status" value="1"/>
</dbReference>
<dbReference type="PROSITE" id="PS50071">
    <property type="entry name" value="HOMEOBOX_2"/>
    <property type="match status" value="1"/>
</dbReference>
<accession>Q18273</accession>
<keyword id="KW-0238">DNA-binding</keyword>
<keyword id="KW-0371">Homeobox</keyword>
<keyword id="KW-0539">Nucleus</keyword>
<keyword id="KW-1185">Reference proteome</keyword>
<comment type="function">
    <text evidence="3 4">Probable transcription factor (PubMed:23788625). Binds to the sequence motif 5'-ATAAT-3' in regulatory elements (PubMed:23788625). Required for development of the anterior hypodermis during embryonic morphogenesis for cell adhesion; also affects embryonic and larval viability (PubMed:11747075). Modulates and maintains dopaminergic neuron differentiation (PubMed:23788625). May activate dopamine pathway genes in concert with ETS domain-containing protein ast-1, and homeobox proteins ceh-40 and ceh-20 (PubMed:23788625).</text>
</comment>
<comment type="subcellular location">
    <subcellularLocation>
        <location evidence="1">Nucleus</location>
    </subcellularLocation>
</comment>
<comment type="tissue specificity">
    <text evidence="3">Predominantly expressed in the head hypdodermis, neuronal support cells and CAN neurons.</text>
</comment>
<comment type="developmental stage">
    <text evidence="4">Expressed in dopaminergic neurons throughout the life of the neurons.</text>
</comment>
<comment type="similarity">
    <text evidence="5">Belongs to the distal-less homeobox family.</text>
</comment>
<name>HM43_CAEEL</name>